<proteinExistence type="evidence at protein level"/>
<dbReference type="EMBL" id="Y08637">
    <property type="protein sequence ID" value="CAA69927.1"/>
    <property type="molecule type" value="mRNA"/>
</dbReference>
<dbReference type="EMBL" id="FO081325">
    <property type="protein sequence ID" value="CCD70799.1"/>
    <property type="molecule type" value="Genomic_DNA"/>
</dbReference>
<dbReference type="RefSeq" id="NP_509129.1">
    <property type="nucleotide sequence ID" value="NM_076728.4"/>
</dbReference>
<dbReference type="SMR" id="Q93149"/>
<dbReference type="FunCoup" id="Q93149">
    <property type="interactions" value="47"/>
</dbReference>
<dbReference type="STRING" id="6239.K11G12.7.1"/>
<dbReference type="TCDB" id="1.A.9.1.2">
    <property type="family name" value="the neurotransmitter receptor, cys loop, ligand-gated ion channel (lic) family"/>
</dbReference>
<dbReference type="GlyCosmos" id="Q93149">
    <property type="glycosylation" value="1 site, No reported glycans"/>
</dbReference>
<dbReference type="PaxDb" id="6239-K11G12.7"/>
<dbReference type="EnsemblMetazoa" id="K11G12.7.1">
    <property type="protein sequence ID" value="K11G12.7.1"/>
    <property type="gene ID" value="WBGene00000043"/>
</dbReference>
<dbReference type="GeneID" id="180937"/>
<dbReference type="KEGG" id="cel:CELE_K11G12.7"/>
<dbReference type="UCSC" id="K11G12.7">
    <property type="organism name" value="c. elegans"/>
</dbReference>
<dbReference type="AGR" id="WB:WBGene00000043"/>
<dbReference type="CTD" id="180937"/>
<dbReference type="WormBase" id="K11G12.7">
    <property type="protein sequence ID" value="CE28345"/>
    <property type="gene ID" value="WBGene00000043"/>
    <property type="gene designation" value="acr-3"/>
</dbReference>
<dbReference type="eggNOG" id="KOG3645">
    <property type="taxonomic scope" value="Eukaryota"/>
</dbReference>
<dbReference type="GeneTree" id="ENSGT00940000173310"/>
<dbReference type="HOGENOM" id="CLU_018074_1_0_1"/>
<dbReference type="InParanoid" id="Q93149"/>
<dbReference type="OMA" id="VEHTGDM"/>
<dbReference type="OrthoDB" id="5975154at2759"/>
<dbReference type="PhylomeDB" id="Q93149"/>
<dbReference type="Reactome" id="R-CEL-629587">
    <property type="pathway name" value="Highly sodium permeable postsynaptic acetylcholine nicotinic receptors"/>
</dbReference>
<dbReference type="Reactome" id="R-CEL-629594">
    <property type="pathway name" value="Highly calcium permeable postsynaptic nicotinic acetylcholine receptors"/>
</dbReference>
<dbReference type="Reactome" id="R-CEL-629597">
    <property type="pathway name" value="Highly calcium permeable nicotinic acetylcholine receptors"/>
</dbReference>
<dbReference type="Reactome" id="R-CEL-6798695">
    <property type="pathway name" value="Neutrophil degranulation"/>
</dbReference>
<dbReference type="PRO" id="PR:Q93149"/>
<dbReference type="Proteomes" id="UP000001940">
    <property type="component" value="Chromosome X"/>
</dbReference>
<dbReference type="Bgee" id="WBGene00000043">
    <property type="expression patterns" value="Expressed in larva"/>
</dbReference>
<dbReference type="GO" id="GO:0005892">
    <property type="term" value="C:acetylcholine-gated channel complex"/>
    <property type="evidence" value="ECO:0000318"/>
    <property type="project" value="GO_Central"/>
</dbReference>
<dbReference type="GO" id="GO:0043005">
    <property type="term" value="C:neuron projection"/>
    <property type="evidence" value="ECO:0000318"/>
    <property type="project" value="GO_Central"/>
</dbReference>
<dbReference type="GO" id="GO:0005886">
    <property type="term" value="C:plasma membrane"/>
    <property type="evidence" value="ECO:0000318"/>
    <property type="project" value="GO_Central"/>
</dbReference>
<dbReference type="GO" id="GO:0045211">
    <property type="term" value="C:postsynaptic membrane"/>
    <property type="evidence" value="ECO:0007669"/>
    <property type="project" value="UniProtKB-SubCell"/>
</dbReference>
<dbReference type="GO" id="GO:0045202">
    <property type="term" value="C:synapse"/>
    <property type="evidence" value="ECO:0000318"/>
    <property type="project" value="GO_Central"/>
</dbReference>
<dbReference type="GO" id="GO:0022848">
    <property type="term" value="F:acetylcholine-gated monoatomic cation-selective channel activity"/>
    <property type="evidence" value="ECO:0000314"/>
    <property type="project" value="WormBase"/>
</dbReference>
<dbReference type="GO" id="GO:0005231">
    <property type="term" value="F:excitatory extracellular ligand-gated monoatomic ion channel activity"/>
    <property type="evidence" value="ECO:0000318"/>
    <property type="project" value="GO_Central"/>
</dbReference>
<dbReference type="GO" id="GO:0005230">
    <property type="term" value="F:extracellular ligand-gated monoatomic ion channel activity"/>
    <property type="evidence" value="ECO:0000314"/>
    <property type="project" value="WormBase"/>
</dbReference>
<dbReference type="GO" id="GO:0004888">
    <property type="term" value="F:transmembrane signaling receptor activity"/>
    <property type="evidence" value="ECO:0007669"/>
    <property type="project" value="InterPro"/>
</dbReference>
<dbReference type="GO" id="GO:1904315">
    <property type="term" value="F:transmitter-gated monoatomic ion channel activity involved in regulation of postsynaptic membrane potential"/>
    <property type="evidence" value="ECO:0000318"/>
    <property type="project" value="GO_Central"/>
</dbReference>
<dbReference type="GO" id="GO:0098703">
    <property type="term" value="P:calcium ion import across plasma membrane"/>
    <property type="evidence" value="ECO:0000314"/>
    <property type="project" value="WormBase"/>
</dbReference>
<dbReference type="GO" id="GO:0007268">
    <property type="term" value="P:chemical synaptic transmission"/>
    <property type="evidence" value="ECO:0000318"/>
    <property type="project" value="GO_Central"/>
</dbReference>
<dbReference type="GO" id="GO:0098662">
    <property type="term" value="P:inorganic cation transmembrane transport"/>
    <property type="evidence" value="ECO:0000314"/>
    <property type="project" value="WormBase"/>
</dbReference>
<dbReference type="GO" id="GO:0034220">
    <property type="term" value="P:monoatomic ion transmembrane transport"/>
    <property type="evidence" value="ECO:0000318"/>
    <property type="project" value="GO_Central"/>
</dbReference>
<dbReference type="GO" id="GO:0042391">
    <property type="term" value="P:regulation of membrane potential"/>
    <property type="evidence" value="ECO:0000318"/>
    <property type="project" value="GO_Central"/>
</dbReference>
<dbReference type="CDD" id="cd19032">
    <property type="entry name" value="LGIC_ECD_nAChR_proto_beta-like"/>
    <property type="match status" value="1"/>
</dbReference>
<dbReference type="CDD" id="cd19064">
    <property type="entry name" value="LGIC_TM_nAChR"/>
    <property type="match status" value="1"/>
</dbReference>
<dbReference type="FunFam" id="1.20.58.390:FF:000035">
    <property type="entry name" value="Acetylcholine receptor subunit beta-like 1"/>
    <property type="match status" value="1"/>
</dbReference>
<dbReference type="FunFam" id="1.20.58.390:FF:000038">
    <property type="entry name" value="Acetylcholine receptor subunit beta-like 1"/>
    <property type="match status" value="1"/>
</dbReference>
<dbReference type="FunFam" id="2.70.170.10:FF:000016">
    <property type="entry name" value="Nicotinic acetylcholine receptor subunit"/>
    <property type="match status" value="1"/>
</dbReference>
<dbReference type="Gene3D" id="2.70.170.10">
    <property type="entry name" value="Neurotransmitter-gated ion-channel ligand-binding domain"/>
    <property type="match status" value="1"/>
</dbReference>
<dbReference type="Gene3D" id="1.20.58.390">
    <property type="entry name" value="Neurotransmitter-gated ion-channel transmembrane domain"/>
    <property type="match status" value="2"/>
</dbReference>
<dbReference type="InterPro" id="IPR006202">
    <property type="entry name" value="Neur_chan_lig-bd"/>
</dbReference>
<dbReference type="InterPro" id="IPR036734">
    <property type="entry name" value="Neur_chan_lig-bd_sf"/>
</dbReference>
<dbReference type="InterPro" id="IPR006201">
    <property type="entry name" value="Neur_channel"/>
</dbReference>
<dbReference type="InterPro" id="IPR036719">
    <property type="entry name" value="Neuro-gated_channel_TM_sf"/>
</dbReference>
<dbReference type="InterPro" id="IPR038050">
    <property type="entry name" value="Neuro_actylchol_rec"/>
</dbReference>
<dbReference type="InterPro" id="IPR006029">
    <property type="entry name" value="Neurotrans-gated_channel_TM"/>
</dbReference>
<dbReference type="InterPro" id="IPR018000">
    <property type="entry name" value="Neurotransmitter_ion_chnl_CS"/>
</dbReference>
<dbReference type="InterPro" id="IPR002394">
    <property type="entry name" value="Nicotinic_acetylcholine_rcpt"/>
</dbReference>
<dbReference type="NCBIfam" id="TIGR00860">
    <property type="entry name" value="LIC"/>
    <property type="match status" value="1"/>
</dbReference>
<dbReference type="PANTHER" id="PTHR18945">
    <property type="entry name" value="NEUROTRANSMITTER GATED ION CHANNEL"/>
    <property type="match status" value="1"/>
</dbReference>
<dbReference type="Pfam" id="PF02931">
    <property type="entry name" value="Neur_chan_LBD"/>
    <property type="match status" value="1"/>
</dbReference>
<dbReference type="Pfam" id="PF02932">
    <property type="entry name" value="Neur_chan_memb"/>
    <property type="match status" value="1"/>
</dbReference>
<dbReference type="PRINTS" id="PR00254">
    <property type="entry name" value="NICOTINICR"/>
</dbReference>
<dbReference type="PRINTS" id="PR00252">
    <property type="entry name" value="NRIONCHANNEL"/>
</dbReference>
<dbReference type="SUPFAM" id="SSF90112">
    <property type="entry name" value="Neurotransmitter-gated ion-channel transmembrane pore"/>
    <property type="match status" value="1"/>
</dbReference>
<dbReference type="SUPFAM" id="SSF63712">
    <property type="entry name" value="Nicotinic receptor ligand binding domain-like"/>
    <property type="match status" value="1"/>
</dbReference>
<dbReference type="PROSITE" id="PS00236">
    <property type="entry name" value="NEUROTR_ION_CHANNEL"/>
    <property type="match status" value="1"/>
</dbReference>
<sequence length="487" mass="56245">MQKIWLFSIITIFLITELQCYPNSAEERLLSYIFDGYNSLIRPVLNASSPPIEVFFSLAFVLLINVDEKNQIMQTNVWPTMKWNDYQMQWDPREFDGIKTIRVPPDKVWLPDIVLFNNADGNYLVSFYSNVVVEHTGDMLWVPPAVYKSSCLIDVEFFPFDEQVCSLTFGSWTFRKDELQLSYLSGKRHVELNDYLPSGVWDLIDAPGLLIDERSKISYQIKIRRKALFYTVILIMPTVLMAFLSMMVFYLPAESSEKITLAISILLALVVFLLVVSKILPPTSSTIPLMAKYLLMTFIMNMITIMVSVIIINVYFRGPATHIMPNWVKTVFLKFLPVLFVMRRPESTEKELAKMKREKRERRSMKSALKTFFKRNDAKISEQPKQTSRKDGSSSEEKLSSDAKKAIEAIEYITTHLTHDNAFKRQREEWKFVSVVIDRLLLYLFFAVTTGGTVGILLSAPNVFEQVNQTSVIERLKQQAAEEMLNS</sequence>
<gene>
    <name type="primary">acr-3</name>
    <name type="ORF">K11G12.7</name>
</gene>
<organism>
    <name type="scientific">Caenorhabditis elegans</name>
    <dbReference type="NCBI Taxonomy" id="6239"/>
    <lineage>
        <taxon>Eukaryota</taxon>
        <taxon>Metazoa</taxon>
        <taxon>Ecdysozoa</taxon>
        <taxon>Nematoda</taxon>
        <taxon>Chromadorea</taxon>
        <taxon>Rhabditida</taxon>
        <taxon>Rhabditina</taxon>
        <taxon>Rhabditomorpha</taxon>
        <taxon>Rhabditoidea</taxon>
        <taxon>Rhabditidae</taxon>
        <taxon>Peloderinae</taxon>
        <taxon>Caenorhabditis</taxon>
    </lineage>
</organism>
<keyword id="KW-1003">Cell membrane</keyword>
<keyword id="KW-1015">Disulfide bond</keyword>
<keyword id="KW-0325">Glycoprotein</keyword>
<keyword id="KW-0407">Ion channel</keyword>
<keyword id="KW-0406">Ion transport</keyword>
<keyword id="KW-1071">Ligand-gated ion channel</keyword>
<keyword id="KW-0472">Membrane</keyword>
<keyword id="KW-0628">Postsynaptic cell membrane</keyword>
<keyword id="KW-0675">Receptor</keyword>
<keyword id="KW-1185">Reference proteome</keyword>
<keyword id="KW-0732">Signal</keyword>
<keyword id="KW-0770">Synapse</keyword>
<keyword id="KW-0812">Transmembrane</keyword>
<keyword id="KW-1133">Transmembrane helix</keyword>
<keyword id="KW-0813">Transport</keyword>
<protein>
    <recommendedName>
        <fullName>Acetylcholine receptor subunit beta-type acr-3</fullName>
    </recommendedName>
</protein>
<accession>Q93149</accession>
<reference key="1">
    <citation type="journal article" date="1997" name="Recept. Channels">
        <title>ACR-3, a Caenorhabditis elegans nicotinic acetylcholine receptor subunit. Molecular cloning and functional expression.</title>
        <authorList>
            <person name="Baylis H.A."/>
            <person name="Matsuda K."/>
            <person name="Squire M.D."/>
            <person name="Fleming J.T."/>
            <person name="Harvey R.J."/>
            <person name="Darlison M.G."/>
            <person name="Barnard E.A."/>
            <person name="Sattelle D.B."/>
        </authorList>
    </citation>
    <scope>NUCLEOTIDE SEQUENCE [MRNA]</scope>
    <scope>FUNCTION</scope>
    <scope>INTERACTION WITH NICOTINIC ACETYLCHOLINE RECEPTOR</scope>
    <source>
        <strain>Bristol N2</strain>
    </source>
</reference>
<reference key="2">
    <citation type="journal article" date="1998" name="Science">
        <title>Genome sequence of the nematode C. elegans: a platform for investigating biology.</title>
        <authorList>
            <consortium name="The C. elegans sequencing consortium"/>
        </authorList>
    </citation>
    <scope>NUCLEOTIDE SEQUENCE [LARGE SCALE GENOMIC DNA]</scope>
    <source>
        <strain>Bristol N2</strain>
    </source>
</reference>
<reference key="3">
    <citation type="journal article" date="2009" name="PLoS Biol.">
        <title>A neuronal acetylcholine receptor regulates the balance of muscle excitation and inhibition in Caenorhabditis elegans.</title>
        <authorList>
            <person name="Jospin M."/>
            <person name="Qi Y.B."/>
            <person name="Stawicki T.M."/>
            <person name="Boulin T."/>
            <person name="Schuske K.R."/>
            <person name="Horvitz H.R."/>
            <person name="Bessereau J.L."/>
            <person name="Jorgensen E.M."/>
            <person name="Jin Y."/>
        </authorList>
    </citation>
    <scope>FUNCTION</scope>
    <scope>INTERACTION WITH NICOTINIC ACETYLCHOLINE RECEPTOR</scope>
</reference>
<name>ACR3_CAEEL</name>
<evidence type="ECO:0000250" key="1"/>
<evidence type="ECO:0000250" key="2">
    <source>
        <dbReference type="UniProtKB" id="Q23022"/>
    </source>
</evidence>
<evidence type="ECO:0000255" key="3"/>
<evidence type="ECO:0000256" key="4">
    <source>
        <dbReference type="SAM" id="MobiDB-lite"/>
    </source>
</evidence>
<evidence type="ECO:0000269" key="5">
    <source>
    </source>
</evidence>
<evidence type="ECO:0000269" key="6">
    <source>
    </source>
</evidence>
<evidence type="ECO:0000305" key="7"/>
<feature type="signal peptide" evidence="3">
    <location>
        <begin position="1"/>
        <end position="20"/>
    </location>
</feature>
<feature type="chain" id="PRO_0000000401" description="Acetylcholine receptor subunit beta-type acr-3">
    <location>
        <begin position="21"/>
        <end position="487"/>
    </location>
</feature>
<feature type="topological domain" description="Extracellular" evidence="3">
    <location>
        <begin position="21"/>
        <end position="231"/>
    </location>
</feature>
<feature type="transmembrane region" description="Helical" evidence="3">
    <location>
        <begin position="232"/>
        <end position="252"/>
    </location>
</feature>
<feature type="transmembrane region" description="Helical" evidence="3">
    <location>
        <begin position="259"/>
        <end position="279"/>
    </location>
</feature>
<feature type="transmembrane region" description="Helical" evidence="3">
    <location>
        <begin position="294"/>
        <end position="314"/>
    </location>
</feature>
<feature type="topological domain" description="Cytoplasmic" evidence="3">
    <location>
        <begin position="315"/>
        <end position="439"/>
    </location>
</feature>
<feature type="transmembrane region" description="Helical" evidence="3">
    <location>
        <begin position="440"/>
        <end position="460"/>
    </location>
</feature>
<feature type="region of interest" description="Disordered" evidence="4">
    <location>
        <begin position="380"/>
        <end position="400"/>
    </location>
</feature>
<feature type="glycosylation site" description="N-linked (GlcNAc...) asparagine" evidence="3">
    <location>
        <position position="46"/>
    </location>
</feature>
<feature type="disulfide bond" evidence="1">
    <location>
        <begin position="151"/>
        <end position="165"/>
    </location>
</feature>
<comment type="function">
    <text evidence="5 6">Non-alpha subunit of nicotinic acetylcholine receptor (nAChR) (PubMed:20027209, PubMed:9606719). Probably acts in cholinergic motoneurons to regulate presynaptic neurotransmitter release, thereby ensuring normal level of excitation of cholinergic motoneurons during locomotion (PubMed:20027209).</text>
</comment>
<comment type="subunit">
    <text evidence="5 6">Component of nicotinic acetylcholine receptor. In cholinergic motoneurons, composed of 2 non-alpha subunits acr-2 and acr-3, and 3 alpha subunits unc-38, unc-63 and acr-12.</text>
</comment>
<comment type="subcellular location">
    <subcellularLocation>
        <location evidence="2">Postsynaptic cell membrane</location>
        <topology evidence="3">Multi-pass membrane protein</topology>
    </subcellularLocation>
    <subcellularLocation>
        <location evidence="2">Cell membrane</location>
        <topology evidence="3">Multi-pass membrane protein</topology>
    </subcellularLocation>
</comment>
<comment type="similarity">
    <text evidence="7">Belongs to the ligand-gated ion channel (TC 1.A.9) family. Acetylcholine receptor (TC 1.A.9.1) subfamily.</text>
</comment>